<gene>
    <name type="primary">RTC5</name>
    <name type="ORF">SCRG_01514</name>
</gene>
<dbReference type="EMBL" id="CH408045">
    <property type="protein sequence ID" value="EDV10714.1"/>
    <property type="molecule type" value="Genomic_DNA"/>
</dbReference>
<dbReference type="SMR" id="B3LJG1"/>
<dbReference type="HOGENOM" id="CLU_011918_1_0_1"/>
<dbReference type="OrthoDB" id="32658at4893"/>
<dbReference type="Proteomes" id="UP000008335">
    <property type="component" value="Unassembled WGS sequence"/>
</dbReference>
<dbReference type="GO" id="GO:0005737">
    <property type="term" value="C:cytoplasm"/>
    <property type="evidence" value="ECO:0007669"/>
    <property type="project" value="UniProtKB-SubCell"/>
</dbReference>
<dbReference type="GO" id="GO:0005634">
    <property type="term" value="C:nucleus"/>
    <property type="evidence" value="ECO:0007669"/>
    <property type="project" value="TreeGrafter"/>
</dbReference>
<dbReference type="GO" id="GO:0006979">
    <property type="term" value="P:response to oxidative stress"/>
    <property type="evidence" value="ECO:0007669"/>
    <property type="project" value="TreeGrafter"/>
</dbReference>
<dbReference type="InterPro" id="IPR006571">
    <property type="entry name" value="TLDc_dom"/>
</dbReference>
<dbReference type="PANTHER" id="PTHR23354">
    <property type="entry name" value="NUCLEOLAR PROTEIN 7/ESTROGEN RECEPTOR COACTIVATOR-RELATED"/>
    <property type="match status" value="1"/>
</dbReference>
<dbReference type="PANTHER" id="PTHR23354:SF130">
    <property type="entry name" value="RESTRICTION OF TELOMERE CAPPING PROTEIN 5"/>
    <property type="match status" value="1"/>
</dbReference>
<dbReference type="Pfam" id="PF07534">
    <property type="entry name" value="TLD"/>
    <property type="match status" value="1"/>
</dbReference>
<dbReference type="SMART" id="SM00584">
    <property type="entry name" value="TLDc"/>
    <property type="match status" value="1"/>
</dbReference>
<dbReference type="PROSITE" id="PS51886">
    <property type="entry name" value="TLDC"/>
    <property type="match status" value="1"/>
</dbReference>
<keyword id="KW-0963">Cytoplasm</keyword>
<name>RTC5_YEAS1</name>
<comment type="function">
    <text evidence="1">May be involved in a process influencing telomere capping.</text>
</comment>
<comment type="subcellular location">
    <subcellularLocation>
        <location evidence="1">Cytoplasm</location>
    </subcellularLocation>
</comment>
<comment type="similarity">
    <text evidence="3">Belongs to the RTC5 family.</text>
</comment>
<reference key="1">
    <citation type="submission" date="2005-03" db="EMBL/GenBank/DDBJ databases">
        <title>Annotation of the Saccharomyces cerevisiae RM11-1a genome.</title>
        <authorList>
            <consortium name="The Broad Institute Genome Sequencing Platform"/>
            <person name="Birren B.W."/>
            <person name="Lander E.S."/>
            <person name="Galagan J.E."/>
            <person name="Nusbaum C."/>
            <person name="Devon K."/>
            <person name="Cuomo C."/>
            <person name="Jaffe D.B."/>
            <person name="Butler J."/>
            <person name="Alvarez P."/>
            <person name="Gnerre S."/>
            <person name="Grabherr M."/>
            <person name="Kleber M."/>
            <person name="Mauceli E.W."/>
            <person name="Brockman W."/>
            <person name="MacCallum I.A."/>
            <person name="Rounsley S."/>
            <person name="Young S.K."/>
            <person name="LaButti K."/>
            <person name="Pushparaj V."/>
            <person name="DeCaprio D."/>
            <person name="Crawford M."/>
            <person name="Koehrsen M."/>
            <person name="Engels R."/>
            <person name="Montgomery P."/>
            <person name="Pearson M."/>
            <person name="Howarth C."/>
            <person name="Larson L."/>
            <person name="Luoma S."/>
            <person name="White J."/>
            <person name="O'Leary S."/>
            <person name="Kodira C.D."/>
            <person name="Zeng Q."/>
            <person name="Yandava C."/>
            <person name="Alvarado L."/>
            <person name="Pratt S."/>
            <person name="Kruglyak L."/>
        </authorList>
    </citation>
    <scope>NUCLEOTIDE SEQUENCE [LARGE SCALE GENOMIC DNA]</scope>
    <source>
        <strain>RM11-1a</strain>
    </source>
</reference>
<feature type="chain" id="PRO_0000408851" description="Restriction of telomere capping protein 5">
    <location>
        <begin position="1"/>
        <end position="567"/>
    </location>
</feature>
<feature type="domain" description="TLDc" evidence="2">
    <location>
        <begin position="289"/>
        <end position="515"/>
    </location>
</feature>
<organism>
    <name type="scientific">Saccharomyces cerevisiae (strain RM11-1a)</name>
    <name type="common">Baker's yeast</name>
    <dbReference type="NCBI Taxonomy" id="285006"/>
    <lineage>
        <taxon>Eukaryota</taxon>
        <taxon>Fungi</taxon>
        <taxon>Dikarya</taxon>
        <taxon>Ascomycota</taxon>
        <taxon>Saccharomycotina</taxon>
        <taxon>Saccharomycetes</taxon>
        <taxon>Saccharomycetales</taxon>
        <taxon>Saccharomycetaceae</taxon>
        <taxon>Saccharomyces</taxon>
    </lineage>
</organism>
<protein>
    <recommendedName>
        <fullName>Restriction of telomere capping protein 5</fullName>
    </recommendedName>
</protein>
<evidence type="ECO:0000250" key="1"/>
<evidence type="ECO:0000255" key="2">
    <source>
        <dbReference type="PROSITE-ProRule" id="PRU01234"/>
    </source>
</evidence>
<evidence type="ECO:0000305" key="3"/>
<proteinExistence type="inferred from homology"/>
<accession>B3LJG1</accession>
<sequence>MGQSSSISSSNEEGSSHSKKFTNSKDILAYFNNKAQQQVTIPELVSFKGNLQIEDLNTPISHKALCNSLYFPQNHAMIVGIVTNMLRVLSNFPLMKSSYEPITGYGLLKCILLLNRARCAKFLKTKSYDQLKLLFISLSLQKTDKEELSEESENDGNKELTIKQIITGFDDVDTEMLCIPADFMLQFLTWLLILTVDCPTTNSKLDNTETHDQWGNFKVSALNLLRTMNPDVVGDIESHSITFQQFSTAIRTVMPNLLKPLENLMEHFFYLQHDLVDHDTNLSSIQDSKVMTPALLAQLSTGLPKELFIHKLQSLYIGRKSGFSMRSLQAKVFKWMAPSILVVSGMRITNSEEYAAEKNPRYRHFLEEFPKLKESDQMMDASHLNKRKTTFAVYIDDPWKVTNKDYFGDLNTRIIEISPRQDIYKVNQKGTIYFNTIGGGIGIGDKQPLIKPASKRYIPGNVSLTFDSTLEFAVFRNTGYGGSLDPGLLSMERKEENSPYELHFLIQDVEVWGCGGEKELEEQIKQLEWEEAESKRRQQINLRSLGEDRALLEMAGLVGQHQGGGSM</sequence>